<organismHost>
    <name type="scientific">Antirrhinum majus</name>
    <name type="common">Garden snapdragon</name>
    <dbReference type="NCBI Taxonomy" id="4151"/>
</organismHost>
<organismHost>
    <name type="scientific">Capsicum</name>
    <name type="common">peppers</name>
    <dbReference type="NCBI Taxonomy" id="4071"/>
</organismHost>
<organismHost>
    <name type="scientific">Delphinium</name>
    <dbReference type="NCBI Taxonomy" id="46246"/>
</organismHost>
<organismHost>
    <name type="scientific">Petunia</name>
    <dbReference type="NCBI Taxonomy" id="4101"/>
</organismHost>
<organismHost>
    <name type="scientific">Solanum lycopersicum</name>
    <name type="common">Tomato</name>
    <name type="synonym">Lycopersicon esculentum</name>
    <dbReference type="NCBI Taxonomy" id="4081"/>
</organismHost>
<organismHost>
    <name type="scientific">Tagetes</name>
    <name type="common">marigolds</name>
    <dbReference type="NCBI Taxonomy" id="13707"/>
</organismHost>
<dbReference type="EMBL" id="X02144">
    <property type="protein sequence ID" value="CAA26083.1"/>
    <property type="molecule type" value="Genomic_RNA"/>
</dbReference>
<dbReference type="Proteomes" id="UP000001451">
    <property type="component" value="Genome"/>
</dbReference>
<dbReference type="GO" id="GO:0030430">
    <property type="term" value="C:host cell cytoplasm"/>
    <property type="evidence" value="ECO:0007669"/>
    <property type="project" value="UniProtKB-KW"/>
</dbReference>
<dbReference type="GO" id="GO:0044219">
    <property type="term" value="C:host cell plasmodesma"/>
    <property type="evidence" value="ECO:0000314"/>
    <property type="project" value="UniProtKB"/>
</dbReference>
<dbReference type="GO" id="GO:0044163">
    <property type="term" value="C:host cytoskeleton"/>
    <property type="evidence" value="ECO:0000303"/>
    <property type="project" value="UniProtKB"/>
</dbReference>
<dbReference type="GO" id="GO:0019034">
    <property type="term" value="C:viral replication complex"/>
    <property type="evidence" value="ECO:0000314"/>
    <property type="project" value="UniProtKB"/>
</dbReference>
<dbReference type="GO" id="GO:0003723">
    <property type="term" value="F:RNA binding"/>
    <property type="evidence" value="ECO:0007669"/>
    <property type="project" value="UniProtKB-KW"/>
</dbReference>
<dbReference type="GO" id="GO:0052040">
    <property type="term" value="P:symbiont-mediated perturbation of host programmed cell death"/>
    <property type="evidence" value="ECO:0007669"/>
    <property type="project" value="UniProtKB-KW"/>
</dbReference>
<dbReference type="GO" id="GO:0046740">
    <property type="term" value="P:transport of virus in host, cell to cell"/>
    <property type="evidence" value="ECO:0007669"/>
    <property type="project" value="UniProtKB-KW"/>
</dbReference>
<dbReference type="InterPro" id="IPR001022">
    <property type="entry name" value="TMV_movement"/>
</dbReference>
<dbReference type="InterPro" id="IPR028919">
    <property type="entry name" value="Viral_movement"/>
</dbReference>
<dbReference type="Pfam" id="PF01107">
    <property type="entry name" value="MP"/>
    <property type="match status" value="1"/>
</dbReference>
<dbReference type="PRINTS" id="PR00964">
    <property type="entry name" value="MOVEMENT"/>
</dbReference>
<name>MVP_TOML</name>
<evidence type="ECO:0000250" key="1">
    <source>
        <dbReference type="UniProtKB" id="A0A0S4IJL0"/>
    </source>
</evidence>
<evidence type="ECO:0000250" key="2">
    <source>
        <dbReference type="UniProtKB" id="P03583"/>
    </source>
</evidence>
<evidence type="ECO:0000256" key="3">
    <source>
        <dbReference type="SAM" id="MobiDB-lite"/>
    </source>
</evidence>
<evidence type="ECO:0000269" key="4">
    <source>
    </source>
</evidence>
<evidence type="ECO:0000269" key="5">
    <source>
    </source>
</evidence>
<evidence type="ECO:0000269" key="6">
    <source>
    </source>
</evidence>
<evidence type="ECO:0000269" key="7">
    <source>
    </source>
</evidence>
<evidence type="ECO:0000269" key="8">
    <source>
    </source>
</evidence>
<evidence type="ECO:0000305" key="9"/>
<evidence type="ECO:0000305" key="10">
    <source>
    </source>
</evidence>
<feature type="chain" id="PRO_0000144970" description="Movement protein">
    <location>
        <begin position="1"/>
        <end position="264"/>
    </location>
</feature>
<feature type="region of interest" description="Disordered" evidence="3">
    <location>
        <begin position="211"/>
        <end position="264"/>
    </location>
</feature>
<feature type="compositionally biased region" description="Basic and acidic residues" evidence="3">
    <location>
        <begin position="237"/>
        <end position="247"/>
    </location>
</feature>
<feature type="sequence variant" description="In strain: Ltbl; ability to grow in tomato plants harboring the ToMV resistance protein Tm-2." evidence="4 6">
    <original>C</original>
    <variation>F</variation>
    <location>
        <position position="68"/>
    </location>
</feature>
<feature type="sequence variant" description="In strain: ToMV2(2); ability to grow in tomato plants harboring the ToMV resistance protein Tm-2(2)." evidence="4 7">
    <original>K</original>
    <variation>E</variation>
    <location>
        <position position="130"/>
    </location>
</feature>
<feature type="sequence variant" description="In strain: Ltbl; ability to grow in tomato plants harboring the ToMV resistance protein Tm-2." evidence="4 6">
    <original>E</original>
    <variation>K</variation>
    <location>
        <position position="133"/>
    </location>
</feature>
<feature type="sequence variant" description="In strain: ToMV2(2); ability to grow in tomato plants harboring the ToMV resistance protein Tm-2(2)." evidence="4 7">
    <original>G</original>
    <variation>E</variation>
    <location>
        <position position="184"/>
    </location>
</feature>
<feature type="sequence variant" description="In strain: ToMV2(2); ability to grow in tomato plants harboring the ToMV resistance protein Tm-2(2)." evidence="4 7">
    <original>S</original>
    <variation>R</variation>
    <location>
        <position position="238"/>
    </location>
</feature>
<feature type="sequence variant" description="In strain: ToMV2(2); ability to grow in tomato plants harboring the ToMV resistance protein Tm-2(2)." evidence="4 7">
    <original>K</original>
    <variation>E</variation>
    <location>
        <position position="244"/>
    </location>
</feature>
<feature type="mutagenesis site" description="Confers the ability to grow in tomato plants harboring the ToMV resistance protein Tm-2(2)." evidence="4 8">
    <location>
        <begin position="235"/>
        <end position="264"/>
    </location>
</feature>
<organism>
    <name type="scientific">Tomato mosaic virus (strain L)</name>
    <name type="common">ToMV</name>
    <name type="synonym">TMV strain tomato</name>
    <dbReference type="NCBI Taxonomy" id="12252"/>
    <lineage>
        <taxon>Viruses</taxon>
        <taxon>Riboviria</taxon>
        <taxon>Orthornavirae</taxon>
        <taxon>Kitrinoviricota</taxon>
        <taxon>Alsuviricetes</taxon>
        <taxon>Martellivirales</taxon>
        <taxon>Virgaviridae</taxon>
        <taxon>Tobamovirus</taxon>
        <taxon>Tobacco mosaic virus</taxon>
    </lineage>
</organism>
<keyword id="KW-1031">Host cell junction</keyword>
<keyword id="KW-1035">Host cytoplasm</keyword>
<keyword id="KW-1037">Host cytoskeleton</keyword>
<keyword id="KW-0928">Hypersensitive response elicitation</keyword>
<keyword id="KW-0694">RNA-binding</keyword>
<keyword id="KW-0813">Transport</keyword>
<keyword id="KW-0916">Viral movement protein</keyword>
<gene>
    <name type="primary">MP</name>
</gene>
<protein>
    <recommendedName>
        <fullName>Movement protein</fullName>
    </recommendedName>
    <alternativeName>
        <fullName>30 kDa protein</fullName>
    </alternativeName>
    <alternativeName>
        <fullName>Cell-to-cell transport protein</fullName>
    </alternativeName>
</protein>
<accession>P69513</accession>
<accession>P03584</accession>
<proteinExistence type="evidence at protein level"/>
<comment type="function">
    <text evidence="2 4">Transports viral genome to neighboring plant cells directly through plasmosdesmata, without any budding. The movement protein allows efficient cell to cell propagation, by bypassing the host cell wall barrier. Forms a ribonucleoprotein complex with viral RNA (By similarity). Triggers host hypersensitive defense reaction in incompatible tomato plants harboring Tm-2, Tm-2nv or Tm-2(2) ToMV resistance (R) proteins (PubMed:15290376).</text>
</comment>
<comment type="function">
    <text evidence="2">Transports viral genome to neighboring plant cells directly through plasmosdesmata, without any budding. The movement protein allows efficient cell to cell propagation, by bypassing the host cell wall barrier. Forms a ribonucleoprotein complex with viral RNA. Binds microtubules and modulates microtubule stability. Can bind double-stranded DNA. Triggers host hypersensitive defense reaction in incompatible plants harboring resistance (R) proteins.</text>
</comment>
<comment type="subunit">
    <text evidence="1 2 5">May bind to host RBCS at the plasmodesmata (e.g. Nicotiana benthamiana RBCS AC A0A0S4IJL0); this interaction seems required for viral systemic movement (PubMed:23148080). In resistant plants, interacts with host MBP2C at host microtubules; this interaction prevents virus cell to cell movement. In resistant plants, interacts with host resistance (R) protein (e.g. tomato ToMV resistance protein TM-2(2), AC Q71BG9) at the host plasma membrane; this interaction triggers host defense responses leading to programmed cell death (By similarity).</text>
</comment>
<comment type="subcellular location">
    <subcellularLocation>
        <location evidence="10">Host cytoplasm</location>
        <location evidence="10">Host cytoskeleton</location>
    </subcellularLocation>
    <subcellularLocation>
        <location evidence="5 10">Host cell junction</location>
        <location evidence="5 10">Host plasmodesma</location>
    </subcellularLocation>
    <text evidence="2 5 10">Binds to the host cytoskeleton before being transported to the host plasmodesmata (Probable). Observed in virus replication complexes (VRCs) of tobamovirus infected host cells (PubMed:23148080). In resistant plants, targeted to the host plasma membrane via the interaction with host resistance (R) protein TM-2.</text>
</comment>
<comment type="similarity">
    <text evidence="9">Belongs to the tobamovirus movement protein family.</text>
</comment>
<reference key="1">
    <citation type="journal article" date="1983" name="Nucleic Acids Res.">
        <title>Molecular cloning and nucleotide sequence of the 30K and the coat protein cistron of TMV (tomato strain) genome.</title>
        <authorList>
            <person name="Takamatsu N."/>
            <person name="Ohno T."/>
            <person name="Meshi T."/>
            <person name="Okada Y."/>
        </authorList>
    </citation>
    <scope>NUCLEOTIDE SEQUENCE [GENOMIC RNA]</scope>
</reference>
<reference key="2">
    <citation type="journal article" date="1984" name="J. Biochem.">
        <title>Nucleotide sequence of the tobacco mosaic virus (tomato strain) genome and comparison with the common strain genome.</title>
        <authorList>
            <person name="Ohno T."/>
            <person name="Aoyagi M."/>
            <person name="Yamanashi Y."/>
            <person name="Saito H."/>
            <person name="Ikawa S."/>
            <person name="Meshi T."/>
            <person name="Okada Y."/>
        </authorList>
    </citation>
    <scope>NUCLEOTIDE SEQUENCE [GENOMIC RNA]</scope>
</reference>
<reference key="3">
    <citation type="journal article" date="1989" name="Plant Cell">
        <title>Mutations in the tobacco mosaic virus 30-kD protein gene overcome Tm-2 resistance in tomato.</title>
        <authorList>
            <person name="Meshi T."/>
            <person name="Motoyoshi F."/>
            <person name="Maeda T."/>
            <person name="Yoshiwoka S."/>
            <person name="Watanabe H."/>
            <person name="Okada Y."/>
        </authorList>
    </citation>
    <scope>VARIANTS PHE-68 AND LYS-133</scope>
</reference>
<reference key="4">
    <citation type="journal article" date="1993" name="J. Virol.">
        <title>Two amino acid substitutions in the tomato mosaic virus 30-kilodalton movement protein confer the ability to overcome the Tm-2(2) resistance gene in the tomato.</title>
        <authorList>
            <person name="Weber H."/>
            <person name="Schultze S."/>
            <person name="Pfitzner A.J.P."/>
        </authorList>
    </citation>
    <scope>VARIANTS GLU-130; GLU-184; ARG-238 AND GLU-244</scope>
</reference>
<reference key="5">
    <citation type="journal article" date="1998" name="Mol. Plant Microbe Interact.">
        <title>Tm-2(2) resistance in tomato requires recognition of the carboxy terminus of the movement protein of tomato mosaic virus.</title>
        <authorList>
            <person name="Weber H."/>
            <person name="Pfitzner A.J.P."/>
        </authorList>
    </citation>
    <scope>MUTAGENESIS OF 235-LYS--TYR-264</scope>
    <scope>VARIANTS GLU-130; GLU-184; ARG-238 AND GLU-244</scope>
</reference>
<reference key="6">
    <citation type="journal article" date="2004" name="Arch. Virol.">
        <title>The Tomato mosaic virus 30 kDa movement protein interacts differentially with the resistance genes Tm-2 and Tm-2(2).</title>
        <authorList>
            <person name="Weber H."/>
            <person name="Ohnesorge S."/>
            <person name="Silber M.V."/>
            <person name="Pfitzner A.J.P."/>
        </authorList>
    </citation>
    <scope>FUNCTION</scope>
    <scope>SUBCELLULAR LOCATION</scope>
    <scope>MUTAGENESIS OF 235-LYS--TYR-264</scope>
    <scope>VARIANTS PHE-68; GLU-130; LYS-133; GLU-184; ARG-238 AND GLU-244</scope>
</reference>
<reference key="7">
    <citation type="journal article" date="2013" name="Plant Physiol.">
        <title>The rubisco small subunit is involved in tobamovirus movement and Tm-2(2)-mediated extreme resistance.</title>
        <authorList>
            <person name="Zhao J."/>
            <person name="Liu Q."/>
            <person name="Zhang H."/>
            <person name="Jia Q."/>
            <person name="Hong Y."/>
            <person name="Liu Y."/>
        </authorList>
    </citation>
    <scope>INTERACTION WITH HOST NICOTIANA BENTHAMIANA RBCS</scope>
    <scope>SUBCELLULAR LOCATION</scope>
</reference>
<sequence length="264" mass="29291">MALVVKGKVNINEFIDLSKSEKLLPSMFTPVKSVMVSKVDKIMVHENESLSEVNLLKGVKLIEGGYVCLVGLVVSGEWNLPDNCRGGVSVCMVDKRMERADEATLGSYYTAAAKKRFQFKVVPNYGITTKDAEKNIWQVLVNIKNVKMSAGYCPLSLEFVSVCIVYKNNIKLGLREKVTSVNDGGPMELSEEVVDEFMENVPMSVRLAKFRTKSSKRGPKNNNNLGKGRSGGRPKPKSFDEVEKEFDNLIEDEAETSVADSDSY</sequence>